<accession>Q160A3</accession>
<feature type="chain" id="PRO_0000266918" description="Probable GTP-binding protein EngB">
    <location>
        <begin position="1"/>
        <end position="206"/>
    </location>
</feature>
<feature type="domain" description="EngB-type G" evidence="1">
    <location>
        <begin position="23"/>
        <end position="197"/>
    </location>
</feature>
<feature type="binding site" evidence="1">
    <location>
        <begin position="31"/>
        <end position="38"/>
    </location>
    <ligand>
        <name>GTP</name>
        <dbReference type="ChEBI" id="CHEBI:37565"/>
    </ligand>
</feature>
<feature type="binding site" evidence="1">
    <location>
        <position position="38"/>
    </location>
    <ligand>
        <name>Mg(2+)</name>
        <dbReference type="ChEBI" id="CHEBI:18420"/>
    </ligand>
</feature>
<feature type="binding site" evidence="1">
    <location>
        <begin position="58"/>
        <end position="62"/>
    </location>
    <ligand>
        <name>GTP</name>
        <dbReference type="ChEBI" id="CHEBI:37565"/>
    </ligand>
</feature>
<feature type="binding site" evidence="1">
    <location>
        <position position="60"/>
    </location>
    <ligand>
        <name>Mg(2+)</name>
        <dbReference type="ChEBI" id="CHEBI:18420"/>
    </ligand>
</feature>
<feature type="binding site" evidence="1">
    <location>
        <begin position="76"/>
        <end position="79"/>
    </location>
    <ligand>
        <name>GTP</name>
        <dbReference type="ChEBI" id="CHEBI:37565"/>
    </ligand>
</feature>
<feature type="binding site" evidence="1">
    <location>
        <begin position="143"/>
        <end position="146"/>
    </location>
    <ligand>
        <name>GTP</name>
        <dbReference type="ChEBI" id="CHEBI:37565"/>
    </ligand>
</feature>
<feature type="binding site" evidence="1">
    <location>
        <begin position="176"/>
        <end position="178"/>
    </location>
    <ligand>
        <name>GTP</name>
        <dbReference type="ChEBI" id="CHEBI:37565"/>
    </ligand>
</feature>
<evidence type="ECO:0000255" key="1">
    <source>
        <dbReference type="HAMAP-Rule" id="MF_00321"/>
    </source>
</evidence>
<dbReference type="EMBL" id="CP000388">
    <property type="protein sequence ID" value="ABG38547.1"/>
    <property type="molecule type" value="Genomic_DNA"/>
</dbReference>
<dbReference type="RefSeq" id="WP_011572965.1">
    <property type="nucleotide sequence ID" value="NC_008228.1"/>
</dbReference>
<dbReference type="SMR" id="Q160A3"/>
<dbReference type="STRING" id="342610.Patl_0014"/>
<dbReference type="KEGG" id="pat:Patl_0014"/>
<dbReference type="eggNOG" id="COG0218">
    <property type="taxonomic scope" value="Bacteria"/>
</dbReference>
<dbReference type="HOGENOM" id="CLU_033732_1_2_6"/>
<dbReference type="OrthoDB" id="9804921at2"/>
<dbReference type="Proteomes" id="UP000001981">
    <property type="component" value="Chromosome"/>
</dbReference>
<dbReference type="GO" id="GO:0005829">
    <property type="term" value="C:cytosol"/>
    <property type="evidence" value="ECO:0007669"/>
    <property type="project" value="TreeGrafter"/>
</dbReference>
<dbReference type="GO" id="GO:0005525">
    <property type="term" value="F:GTP binding"/>
    <property type="evidence" value="ECO:0007669"/>
    <property type="project" value="UniProtKB-UniRule"/>
</dbReference>
<dbReference type="GO" id="GO:0046872">
    <property type="term" value="F:metal ion binding"/>
    <property type="evidence" value="ECO:0007669"/>
    <property type="project" value="UniProtKB-KW"/>
</dbReference>
<dbReference type="GO" id="GO:0000917">
    <property type="term" value="P:division septum assembly"/>
    <property type="evidence" value="ECO:0007669"/>
    <property type="project" value="UniProtKB-KW"/>
</dbReference>
<dbReference type="CDD" id="cd01876">
    <property type="entry name" value="YihA_EngB"/>
    <property type="match status" value="1"/>
</dbReference>
<dbReference type="FunFam" id="3.40.50.300:FF:000098">
    <property type="entry name" value="Probable GTP-binding protein EngB"/>
    <property type="match status" value="1"/>
</dbReference>
<dbReference type="Gene3D" id="3.40.50.300">
    <property type="entry name" value="P-loop containing nucleotide triphosphate hydrolases"/>
    <property type="match status" value="1"/>
</dbReference>
<dbReference type="HAMAP" id="MF_00321">
    <property type="entry name" value="GTPase_EngB"/>
    <property type="match status" value="1"/>
</dbReference>
<dbReference type="InterPro" id="IPR030393">
    <property type="entry name" value="G_ENGB_dom"/>
</dbReference>
<dbReference type="InterPro" id="IPR006073">
    <property type="entry name" value="GTP-bd"/>
</dbReference>
<dbReference type="InterPro" id="IPR019987">
    <property type="entry name" value="GTP-bd_ribosome_bio_YsxC"/>
</dbReference>
<dbReference type="InterPro" id="IPR027417">
    <property type="entry name" value="P-loop_NTPase"/>
</dbReference>
<dbReference type="NCBIfam" id="TIGR03598">
    <property type="entry name" value="GTPase_YsxC"/>
    <property type="match status" value="1"/>
</dbReference>
<dbReference type="PANTHER" id="PTHR11649:SF13">
    <property type="entry name" value="ENGB-TYPE G DOMAIN-CONTAINING PROTEIN"/>
    <property type="match status" value="1"/>
</dbReference>
<dbReference type="PANTHER" id="PTHR11649">
    <property type="entry name" value="MSS1/TRME-RELATED GTP-BINDING PROTEIN"/>
    <property type="match status" value="1"/>
</dbReference>
<dbReference type="Pfam" id="PF01926">
    <property type="entry name" value="MMR_HSR1"/>
    <property type="match status" value="1"/>
</dbReference>
<dbReference type="SUPFAM" id="SSF52540">
    <property type="entry name" value="P-loop containing nucleoside triphosphate hydrolases"/>
    <property type="match status" value="1"/>
</dbReference>
<dbReference type="PROSITE" id="PS51706">
    <property type="entry name" value="G_ENGB"/>
    <property type="match status" value="1"/>
</dbReference>
<protein>
    <recommendedName>
        <fullName evidence="1">Probable GTP-binding protein EngB</fullName>
    </recommendedName>
</protein>
<gene>
    <name evidence="1" type="primary">engB</name>
    <name type="ordered locus">Patl_0014</name>
</gene>
<sequence>MSHYSQAKFNLSAPDISHLSADQGIEVAFAGRSNAGKSSALNRLTRQKSLARTSKTPGRTQLINVFDLDEDRRLIDLPGYGYAKVPMAIKLKWQKSLGEYLQKRESLKGLVVLMDIRHPFKDLDQELIQWAVAADLPVLGLLTKADKLKSGKRKAQLLMAREASLAFCGDVTIHLFSSLNGLGLDNCERVLDKWFGYAQDEELEQE</sequence>
<proteinExistence type="inferred from homology"/>
<comment type="function">
    <text evidence="1">Necessary for normal cell division and for the maintenance of normal septation.</text>
</comment>
<comment type="cofactor">
    <cofactor evidence="1">
        <name>Mg(2+)</name>
        <dbReference type="ChEBI" id="CHEBI:18420"/>
    </cofactor>
</comment>
<comment type="similarity">
    <text evidence="1">Belongs to the TRAFAC class TrmE-Era-EngA-EngB-Septin-like GTPase superfamily. EngB GTPase family.</text>
</comment>
<keyword id="KW-0131">Cell cycle</keyword>
<keyword id="KW-0132">Cell division</keyword>
<keyword id="KW-0342">GTP-binding</keyword>
<keyword id="KW-0460">Magnesium</keyword>
<keyword id="KW-0479">Metal-binding</keyword>
<keyword id="KW-0547">Nucleotide-binding</keyword>
<keyword id="KW-0717">Septation</keyword>
<name>ENGB_PSEA6</name>
<organism>
    <name type="scientific">Pseudoalteromonas atlantica (strain T6c / ATCC BAA-1087)</name>
    <dbReference type="NCBI Taxonomy" id="3042615"/>
    <lineage>
        <taxon>Bacteria</taxon>
        <taxon>Pseudomonadati</taxon>
        <taxon>Pseudomonadota</taxon>
        <taxon>Gammaproteobacteria</taxon>
        <taxon>Alteromonadales</taxon>
        <taxon>Alteromonadaceae</taxon>
        <taxon>Paraglaciecola</taxon>
    </lineage>
</organism>
<reference key="1">
    <citation type="submission" date="2006-06" db="EMBL/GenBank/DDBJ databases">
        <title>Complete sequence of Pseudoalteromonas atlantica T6c.</title>
        <authorList>
            <consortium name="US DOE Joint Genome Institute"/>
            <person name="Copeland A."/>
            <person name="Lucas S."/>
            <person name="Lapidus A."/>
            <person name="Barry K."/>
            <person name="Detter J.C."/>
            <person name="Glavina del Rio T."/>
            <person name="Hammon N."/>
            <person name="Israni S."/>
            <person name="Dalin E."/>
            <person name="Tice H."/>
            <person name="Pitluck S."/>
            <person name="Saunders E."/>
            <person name="Brettin T."/>
            <person name="Bruce D."/>
            <person name="Han C."/>
            <person name="Tapia R."/>
            <person name="Gilna P."/>
            <person name="Schmutz J."/>
            <person name="Larimer F."/>
            <person name="Land M."/>
            <person name="Hauser L."/>
            <person name="Kyrpides N."/>
            <person name="Kim E."/>
            <person name="Karls A.C."/>
            <person name="Bartlett D."/>
            <person name="Higgins B.P."/>
            <person name="Richardson P."/>
        </authorList>
    </citation>
    <scope>NUCLEOTIDE SEQUENCE [LARGE SCALE GENOMIC DNA]</scope>
    <source>
        <strain>T6c / ATCC BAA-1087</strain>
    </source>
</reference>